<dbReference type="EC" id="7.1.2.2" evidence="1"/>
<dbReference type="EMBL" id="AM260479">
    <property type="protein sequence ID" value="CAJ94696.1"/>
    <property type="molecule type" value="Genomic_DNA"/>
</dbReference>
<dbReference type="RefSeq" id="WP_010811265.1">
    <property type="nucleotide sequence ID" value="NZ_CP039287.1"/>
</dbReference>
<dbReference type="SMR" id="Q0K5M5"/>
<dbReference type="STRING" id="381666.H16_A3639"/>
<dbReference type="KEGG" id="reh:H16_A3639"/>
<dbReference type="eggNOG" id="COG0056">
    <property type="taxonomic scope" value="Bacteria"/>
</dbReference>
<dbReference type="HOGENOM" id="CLU_010091_2_1_4"/>
<dbReference type="OrthoDB" id="9803053at2"/>
<dbReference type="Proteomes" id="UP000008210">
    <property type="component" value="Chromosome 1"/>
</dbReference>
<dbReference type="GO" id="GO:0005886">
    <property type="term" value="C:plasma membrane"/>
    <property type="evidence" value="ECO:0007669"/>
    <property type="project" value="UniProtKB-SubCell"/>
</dbReference>
<dbReference type="GO" id="GO:0045259">
    <property type="term" value="C:proton-transporting ATP synthase complex"/>
    <property type="evidence" value="ECO:0007669"/>
    <property type="project" value="UniProtKB-KW"/>
</dbReference>
<dbReference type="GO" id="GO:0043531">
    <property type="term" value="F:ADP binding"/>
    <property type="evidence" value="ECO:0007669"/>
    <property type="project" value="TreeGrafter"/>
</dbReference>
<dbReference type="GO" id="GO:0005524">
    <property type="term" value="F:ATP binding"/>
    <property type="evidence" value="ECO:0007669"/>
    <property type="project" value="UniProtKB-UniRule"/>
</dbReference>
<dbReference type="GO" id="GO:0046933">
    <property type="term" value="F:proton-transporting ATP synthase activity, rotational mechanism"/>
    <property type="evidence" value="ECO:0007669"/>
    <property type="project" value="UniProtKB-UniRule"/>
</dbReference>
<dbReference type="CDD" id="cd18113">
    <property type="entry name" value="ATP-synt_F1_alpha_C"/>
    <property type="match status" value="1"/>
</dbReference>
<dbReference type="CDD" id="cd18116">
    <property type="entry name" value="ATP-synt_F1_alpha_N"/>
    <property type="match status" value="1"/>
</dbReference>
<dbReference type="CDD" id="cd01132">
    <property type="entry name" value="F1-ATPase_alpha_CD"/>
    <property type="match status" value="1"/>
</dbReference>
<dbReference type="FunFam" id="1.20.150.20:FF:000001">
    <property type="entry name" value="ATP synthase subunit alpha"/>
    <property type="match status" value="1"/>
</dbReference>
<dbReference type="FunFam" id="2.40.30.20:FF:000001">
    <property type="entry name" value="ATP synthase subunit alpha"/>
    <property type="match status" value="1"/>
</dbReference>
<dbReference type="FunFam" id="3.40.50.300:FF:000002">
    <property type="entry name" value="ATP synthase subunit alpha"/>
    <property type="match status" value="1"/>
</dbReference>
<dbReference type="Gene3D" id="2.40.30.20">
    <property type="match status" value="1"/>
</dbReference>
<dbReference type="Gene3D" id="1.20.150.20">
    <property type="entry name" value="ATP synthase alpha/beta chain, C-terminal domain"/>
    <property type="match status" value="1"/>
</dbReference>
<dbReference type="Gene3D" id="3.40.50.300">
    <property type="entry name" value="P-loop containing nucleotide triphosphate hydrolases"/>
    <property type="match status" value="1"/>
</dbReference>
<dbReference type="HAMAP" id="MF_01346">
    <property type="entry name" value="ATP_synth_alpha_bact"/>
    <property type="match status" value="1"/>
</dbReference>
<dbReference type="InterPro" id="IPR023366">
    <property type="entry name" value="ATP_synth_asu-like_sf"/>
</dbReference>
<dbReference type="InterPro" id="IPR000793">
    <property type="entry name" value="ATP_synth_asu_C"/>
</dbReference>
<dbReference type="InterPro" id="IPR038376">
    <property type="entry name" value="ATP_synth_asu_C_sf"/>
</dbReference>
<dbReference type="InterPro" id="IPR033732">
    <property type="entry name" value="ATP_synth_F1_a_nt-bd_dom"/>
</dbReference>
<dbReference type="InterPro" id="IPR005294">
    <property type="entry name" value="ATP_synth_F1_asu"/>
</dbReference>
<dbReference type="InterPro" id="IPR020003">
    <property type="entry name" value="ATPase_a/bsu_AS"/>
</dbReference>
<dbReference type="InterPro" id="IPR004100">
    <property type="entry name" value="ATPase_F1/V1/A1_a/bsu_N"/>
</dbReference>
<dbReference type="InterPro" id="IPR036121">
    <property type="entry name" value="ATPase_F1/V1/A1_a/bsu_N_sf"/>
</dbReference>
<dbReference type="InterPro" id="IPR000194">
    <property type="entry name" value="ATPase_F1/V1/A1_a/bsu_nucl-bd"/>
</dbReference>
<dbReference type="InterPro" id="IPR027417">
    <property type="entry name" value="P-loop_NTPase"/>
</dbReference>
<dbReference type="NCBIfam" id="TIGR00962">
    <property type="entry name" value="atpA"/>
    <property type="match status" value="1"/>
</dbReference>
<dbReference type="NCBIfam" id="NF009884">
    <property type="entry name" value="PRK13343.1"/>
    <property type="match status" value="1"/>
</dbReference>
<dbReference type="PANTHER" id="PTHR48082">
    <property type="entry name" value="ATP SYNTHASE SUBUNIT ALPHA, MITOCHONDRIAL"/>
    <property type="match status" value="1"/>
</dbReference>
<dbReference type="PANTHER" id="PTHR48082:SF2">
    <property type="entry name" value="ATP SYNTHASE SUBUNIT ALPHA, MITOCHONDRIAL"/>
    <property type="match status" value="1"/>
</dbReference>
<dbReference type="Pfam" id="PF00006">
    <property type="entry name" value="ATP-synt_ab"/>
    <property type="match status" value="1"/>
</dbReference>
<dbReference type="Pfam" id="PF00306">
    <property type="entry name" value="ATP-synt_ab_C"/>
    <property type="match status" value="1"/>
</dbReference>
<dbReference type="Pfam" id="PF02874">
    <property type="entry name" value="ATP-synt_ab_N"/>
    <property type="match status" value="1"/>
</dbReference>
<dbReference type="PIRSF" id="PIRSF039088">
    <property type="entry name" value="F_ATPase_subunit_alpha"/>
    <property type="match status" value="1"/>
</dbReference>
<dbReference type="SUPFAM" id="SSF47917">
    <property type="entry name" value="C-terminal domain of alpha and beta subunits of F1 ATP synthase"/>
    <property type="match status" value="1"/>
</dbReference>
<dbReference type="SUPFAM" id="SSF50615">
    <property type="entry name" value="N-terminal domain of alpha and beta subunits of F1 ATP synthase"/>
    <property type="match status" value="1"/>
</dbReference>
<dbReference type="SUPFAM" id="SSF52540">
    <property type="entry name" value="P-loop containing nucleoside triphosphate hydrolases"/>
    <property type="match status" value="1"/>
</dbReference>
<dbReference type="PROSITE" id="PS00152">
    <property type="entry name" value="ATPASE_ALPHA_BETA"/>
    <property type="match status" value="1"/>
</dbReference>
<keyword id="KW-0066">ATP synthesis</keyword>
<keyword id="KW-0067">ATP-binding</keyword>
<keyword id="KW-0997">Cell inner membrane</keyword>
<keyword id="KW-1003">Cell membrane</keyword>
<keyword id="KW-0139">CF(1)</keyword>
<keyword id="KW-0375">Hydrogen ion transport</keyword>
<keyword id="KW-0406">Ion transport</keyword>
<keyword id="KW-0472">Membrane</keyword>
<keyword id="KW-0547">Nucleotide-binding</keyword>
<keyword id="KW-1185">Reference proteome</keyword>
<keyword id="KW-1278">Translocase</keyword>
<keyword id="KW-0813">Transport</keyword>
<sequence>MQLNPSEISELIKSRISGLGAEAEVRNTGTVISVTDGICRVHGLSGVMQGEMLEFPGNTFGLALNLERDSVGAVVLGEYEHISEGDTVKCTGRILEVPVGKELLGRVVNTLGQPIDGKGPINAKETDVIEKVAPGVIARQSVSQPVQTGLKSIDAMVPIGRGQRELIIGDRQTGKTAVAVDAIINQKGKGVFCVYVAVGQKASTIANVVRKLEEHGAMEYTVVVAAAASDSAAMQYLAPYAGCTMGEYFRDRGEDALIVYDDLTKQAWAYRQVSLLLRRPPGREAYPGDVFYLHSRLLERAARVNADYVEKFTNGAVKGKTGSLTALPVIETQAGDVSAFVPTNVISITDGQIFLETDLFNAGIRPAINAGISVSRVGGAAQTKVVKNLSGGIRTDLAQYRELAAFAQFASDLDDATRKQLERGRRVTELLKQPQYQPLQVWQLAASLFAANNGFLDNVEVKDILPFEKGLHDHLKTKYADLINRIEETKQLSKEDEAALRAAVEDFKKSAAF</sequence>
<protein>
    <recommendedName>
        <fullName evidence="1">ATP synthase subunit alpha</fullName>
        <ecNumber evidence="1">7.1.2.2</ecNumber>
    </recommendedName>
    <alternativeName>
        <fullName evidence="1">ATP synthase F1 sector subunit alpha</fullName>
    </alternativeName>
    <alternativeName>
        <fullName evidence="1">F-ATPase subunit alpha</fullName>
    </alternativeName>
</protein>
<feature type="chain" id="PRO_0000302692" description="ATP synthase subunit alpha">
    <location>
        <begin position="1"/>
        <end position="513"/>
    </location>
</feature>
<feature type="binding site" evidence="1">
    <location>
        <begin position="169"/>
        <end position="176"/>
    </location>
    <ligand>
        <name>ATP</name>
        <dbReference type="ChEBI" id="CHEBI:30616"/>
    </ligand>
</feature>
<feature type="site" description="Required for activity" evidence="1">
    <location>
        <position position="373"/>
    </location>
</feature>
<proteinExistence type="inferred from homology"/>
<organism>
    <name type="scientific">Cupriavidus necator (strain ATCC 17699 / DSM 428 / KCTC 22496 / NCIMB 10442 / H16 / Stanier 337)</name>
    <name type="common">Ralstonia eutropha</name>
    <dbReference type="NCBI Taxonomy" id="381666"/>
    <lineage>
        <taxon>Bacteria</taxon>
        <taxon>Pseudomonadati</taxon>
        <taxon>Pseudomonadota</taxon>
        <taxon>Betaproteobacteria</taxon>
        <taxon>Burkholderiales</taxon>
        <taxon>Burkholderiaceae</taxon>
        <taxon>Cupriavidus</taxon>
    </lineage>
</organism>
<name>ATPA_CUPNH</name>
<reference key="1">
    <citation type="journal article" date="2006" name="Nat. Biotechnol.">
        <title>Genome sequence of the bioplastic-producing 'Knallgas' bacterium Ralstonia eutropha H16.</title>
        <authorList>
            <person name="Pohlmann A."/>
            <person name="Fricke W.F."/>
            <person name="Reinecke F."/>
            <person name="Kusian B."/>
            <person name="Liesegang H."/>
            <person name="Cramm R."/>
            <person name="Eitinger T."/>
            <person name="Ewering C."/>
            <person name="Poetter M."/>
            <person name="Schwartz E."/>
            <person name="Strittmatter A."/>
            <person name="Voss I."/>
            <person name="Gottschalk G."/>
            <person name="Steinbuechel A."/>
            <person name="Friedrich B."/>
            <person name="Bowien B."/>
        </authorList>
    </citation>
    <scope>NUCLEOTIDE SEQUENCE [LARGE SCALE GENOMIC DNA]</scope>
    <source>
        <strain>ATCC 17699 / DSM 428 / KCTC 22496 / NCIMB 10442 / H16 / Stanier 337</strain>
    </source>
</reference>
<gene>
    <name evidence="1" type="primary">atpA</name>
    <name type="ordered locus">H16_A3639</name>
</gene>
<comment type="function">
    <text evidence="1">Produces ATP from ADP in the presence of a proton gradient across the membrane. The alpha chain is a regulatory subunit.</text>
</comment>
<comment type="catalytic activity">
    <reaction evidence="1">
        <text>ATP + H2O + 4 H(+)(in) = ADP + phosphate + 5 H(+)(out)</text>
        <dbReference type="Rhea" id="RHEA:57720"/>
        <dbReference type="ChEBI" id="CHEBI:15377"/>
        <dbReference type="ChEBI" id="CHEBI:15378"/>
        <dbReference type="ChEBI" id="CHEBI:30616"/>
        <dbReference type="ChEBI" id="CHEBI:43474"/>
        <dbReference type="ChEBI" id="CHEBI:456216"/>
        <dbReference type="EC" id="7.1.2.2"/>
    </reaction>
</comment>
<comment type="subunit">
    <text evidence="1">F-type ATPases have 2 components, CF(1) - the catalytic core - and CF(0) - the membrane proton channel. CF(1) has five subunits: alpha(3), beta(3), gamma(1), delta(1), epsilon(1). CF(0) has three main subunits: a(1), b(2) and c(9-12). The alpha and beta chains form an alternating ring which encloses part of the gamma chain. CF(1) is attached to CF(0) by a central stalk formed by the gamma and epsilon chains, while a peripheral stalk is formed by the delta and b chains.</text>
</comment>
<comment type="subcellular location">
    <subcellularLocation>
        <location evidence="1">Cell inner membrane</location>
        <topology evidence="1">Peripheral membrane protein</topology>
    </subcellularLocation>
</comment>
<comment type="similarity">
    <text evidence="1">Belongs to the ATPase alpha/beta chains family.</text>
</comment>
<accession>Q0K5M5</accession>
<evidence type="ECO:0000255" key="1">
    <source>
        <dbReference type="HAMAP-Rule" id="MF_01346"/>
    </source>
</evidence>